<name>PRHC_PENBI</name>
<reference key="1">
    <citation type="journal article" date="2016" name="J. Am. Chem. Soc.">
        <title>Discovery of key dioxygenases that diverged the paraherquonin and acetoxydehydroaustin pathways in Penicillium brasilianum.</title>
        <authorList>
            <person name="Matsuda Y."/>
            <person name="Iwabuchi T."/>
            <person name="Fujimoto T."/>
            <person name="Awakawa T."/>
            <person name="Nakashima Y."/>
            <person name="Mori T."/>
            <person name="Zhang H."/>
            <person name="Hayashi F."/>
            <person name="Abe I."/>
        </authorList>
    </citation>
    <scope>NUCLEOTIDE SEQUENCE [GENOMIC DNA]</scope>
    <scope>FUNCTION</scope>
    <scope>PATHWAY</scope>
    <source>
        <strain>ATCC 22354 / NBRC 6234 / CBS 338.59 / FRR 3454 / IMI 68220</strain>
    </source>
</reference>
<reference key="2">
    <citation type="journal article" date="2018" name="Nat. Commun.">
        <title>Structure function and engineering of multifunctional non-heme iron dependent oxygenases in fungal meroterpenoid biosynthesis.</title>
        <authorList>
            <person name="Nakashima Y."/>
            <person name="Mori T."/>
            <person name="Nakamura H."/>
            <person name="Awakawa T."/>
            <person name="Hoshino S."/>
            <person name="Senda M."/>
            <person name="Senda T."/>
            <person name="Abe I."/>
        </authorList>
    </citation>
    <scope>FUNCTION</scope>
</reference>
<reference evidence="10" key="3">
    <citation type="journal article" date="2017" name="Nat. Chem. Biol.">
        <title>Molecular basis for the unusual ring reconstruction in fungal meroterpenoid biogenesis.</title>
        <authorList>
            <person name="Mori T."/>
            <person name="Iwabuchi T."/>
            <person name="Hoshino S."/>
            <person name="Wang H."/>
            <person name="Matsuda Y."/>
            <person name="Abe I."/>
        </authorList>
    </citation>
    <scope>X-RAY CRYSTALLOGRAPHY (2.10 ANGSTROMS)</scope>
    <scope>SUBUNIT</scope>
    <scope>FUNCTION</scope>
    <scope>CATALYTIC ACTIVITY</scope>
    <scope>PATHWAY</scope>
</reference>
<organism>
    <name type="scientific">Penicillium brasilianum</name>
    <dbReference type="NCBI Taxonomy" id="104259"/>
    <lineage>
        <taxon>Eukaryota</taxon>
        <taxon>Fungi</taxon>
        <taxon>Dikarya</taxon>
        <taxon>Ascomycota</taxon>
        <taxon>Pezizomycotina</taxon>
        <taxon>Eurotiomycetes</taxon>
        <taxon>Eurotiomycetidae</taxon>
        <taxon>Eurotiales</taxon>
        <taxon>Aspergillaceae</taxon>
        <taxon>Penicillium</taxon>
    </lineage>
</organism>
<feature type="chain" id="PRO_0000449169" description="Isomerase prhC">
    <location>
        <begin position="1"/>
        <end position="174"/>
    </location>
</feature>
<feature type="helix" evidence="11">
    <location>
        <begin position="6"/>
        <end position="23"/>
    </location>
</feature>
<feature type="helix" evidence="11">
    <location>
        <begin position="26"/>
        <end position="31"/>
    </location>
</feature>
<feature type="strand" evidence="11">
    <location>
        <begin position="33"/>
        <end position="41"/>
    </location>
</feature>
<feature type="helix" evidence="11">
    <location>
        <begin position="53"/>
        <end position="66"/>
    </location>
</feature>
<feature type="strand" evidence="11">
    <location>
        <begin position="67"/>
        <end position="74"/>
    </location>
</feature>
<feature type="helix" evidence="11">
    <location>
        <begin position="77"/>
        <end position="79"/>
    </location>
</feature>
<feature type="strand" evidence="11">
    <location>
        <begin position="81"/>
        <end position="83"/>
    </location>
</feature>
<feature type="turn" evidence="11">
    <location>
        <begin position="84"/>
        <end position="87"/>
    </location>
</feature>
<feature type="strand" evidence="11">
    <location>
        <begin position="88"/>
        <end position="99"/>
    </location>
</feature>
<feature type="strand" evidence="11">
    <location>
        <begin position="104"/>
        <end position="114"/>
    </location>
</feature>
<feature type="strand" evidence="11">
    <location>
        <begin position="120"/>
        <end position="128"/>
    </location>
</feature>
<feature type="helix" evidence="11">
    <location>
        <begin position="130"/>
        <end position="141"/>
    </location>
</feature>
<feature type="turn" evidence="11">
    <location>
        <begin position="142"/>
        <end position="144"/>
    </location>
</feature>
<feature type="helix" evidence="11">
    <location>
        <begin position="147"/>
        <end position="153"/>
    </location>
</feature>
<keyword id="KW-0002">3D-structure</keyword>
<keyword id="KW-0413">Isomerase</keyword>
<sequence>MASNSTREKLIALAHKFCSIISSGDMEAVLALRTESCLTYQCCPSFSTRPLNNQETREYFEEWKHIGWNSKFWIIDEGTMVVDEAAKKIAFRAACSADTIGGPYENENLVILQATDDCALVDGIWEFFDAVRKQDLMNRLAAKQAAKGLDSWCANTHSGDDKGVPANNESKVAA</sequence>
<accession>A0A1E1FFL1</accession>
<dbReference type="EC" id="5.-.-.-" evidence="8"/>
<dbReference type="EMBL" id="LC127182">
    <property type="protein sequence ID" value="BAV69304.1"/>
    <property type="molecule type" value="Genomic_DNA"/>
</dbReference>
<dbReference type="PDB" id="5X9J">
    <property type="method" value="X-ray"/>
    <property type="resolution" value="2.10 A"/>
    <property type="chains" value="A/B=1-174"/>
</dbReference>
<dbReference type="PDBsum" id="5X9J"/>
<dbReference type="SMR" id="A0A1E1FFL1"/>
<dbReference type="UniPathway" id="UPA00213"/>
<dbReference type="GO" id="GO:0016853">
    <property type="term" value="F:isomerase activity"/>
    <property type="evidence" value="ECO:0000314"/>
    <property type="project" value="GO_Central"/>
</dbReference>
<dbReference type="GO" id="GO:0140874">
    <property type="term" value="P:paraherquonin biosynthetic process"/>
    <property type="evidence" value="ECO:0000314"/>
    <property type="project" value="GO_Central"/>
</dbReference>
<dbReference type="InterPro" id="IPR050977">
    <property type="entry name" value="Fungal_Meroterpenoid_Isomerase"/>
</dbReference>
<dbReference type="PANTHER" id="PTHR39598:SF1">
    <property type="entry name" value="AUSTINOID BIOSYNTHESIS CLUSTERS PROTEIN F-RELATED"/>
    <property type="match status" value="1"/>
</dbReference>
<dbReference type="PANTHER" id="PTHR39598">
    <property type="entry name" value="AUSTINOL SYNTHESIS PROTEIN F-RELATED"/>
    <property type="match status" value="1"/>
</dbReference>
<comment type="function">
    <text evidence="1 2 4 7 8 9">Isomerase; part of the gene cluster that mediates the biosynthesis of paraherquonin, a meroterpenoid with a unique, highly congested hexacyclic molecular architecture (PubMed:27602587). The first step of the pathway is the synthesis of 3,5-dimethylorsellinic acid (DMOA) by the polyketide synthase prhL (By similarity). Synthesis of DMOA is followed by farnesylation by the prenyltransferase prhE, methylesterification by the methyl-transferase prhM, epoxidation of the prenyl chain by the flavin-dependent monooxygenase prhF, and cyclization of the farnesyl moiety by the terpene cyclase prhH, to yield the tetracyclic intermediate, protoaustinoid A (By similarity). The short chain dehydrogenase prhI then oxidizes the C-3 alcohol group of the terpene cyclase product to transform protoaustinoid A into protoaustinoid B (PubMed:27602587). The FAD-binding monooxygenase prhJ catalyzes the oxidation of protoaustinoid B into preaustinoid A which is further oxidized into preaustinoid A1 by FAD-binding monooxygenase phrK (PubMed:27602587). Finally, prhA leads to berkeleydione via the berkeleyone B intermediate (PubMed:27602587, PubMed:29317628). PrhA is a multifunctional dioxygenase that first desaturates at C5-C6 to form berkeleyone B, followed by rearrangement of the A/B-ring to form the cycloheptadiene moiety in berkeleydione (PubMed:27602587, PubMed:29317628). Berkeleydione serves as the key intermediate for the biosynthesis of paraherquonin as well as many other meroterpenoids (Probable). The cytochrome P450 monooxygenases prhB, prhD, and prhN, as well as the isomerase prhC, are probably involved in the late stage of paraherquonin biosynthesis, after the production of berkeleydione (Probable). Especially prhC might be a multifunctional enzyme that catalyzes the D-ring expansion via intramolecular methoxy rearrangement, as well as the hydrolysis of the expanded D-ring (Probable).</text>
</comment>
<comment type="pathway">
    <text evidence="7">Secondary metabolite biosynthesis; terpenoid biosynthesis.</text>
</comment>
<comment type="subunit">
    <text evidence="3">Homodimer.</text>
</comment>
<comment type="similarity">
    <text evidence="6">Belongs to the trt14 isomerase family.</text>
</comment>
<protein>
    <recommendedName>
        <fullName evidence="5">Isomerase prhC</fullName>
        <ecNumber evidence="8">5.-.-.-</ecNumber>
    </recommendedName>
    <alternativeName>
        <fullName evidence="5">Paraherquonin biosynthesis cluster protein C</fullName>
    </alternativeName>
</protein>
<evidence type="ECO:0000250" key="1">
    <source>
        <dbReference type="UniProtKB" id="Q5ATJ7"/>
    </source>
</evidence>
<evidence type="ECO:0000269" key="2">
    <source>
    </source>
</evidence>
<evidence type="ECO:0000269" key="3">
    <source>
    </source>
</evidence>
<evidence type="ECO:0000269" key="4">
    <source>
    </source>
</evidence>
<evidence type="ECO:0000303" key="5">
    <source>
    </source>
</evidence>
<evidence type="ECO:0000305" key="6"/>
<evidence type="ECO:0000305" key="7">
    <source>
    </source>
</evidence>
<evidence type="ECO:0000305" key="8">
    <source>
    </source>
</evidence>
<evidence type="ECO:0000305" key="9">
    <source>
    </source>
</evidence>
<evidence type="ECO:0007744" key="10">
    <source>
        <dbReference type="PDB" id="5X9J"/>
    </source>
</evidence>
<evidence type="ECO:0007829" key="11">
    <source>
        <dbReference type="PDB" id="5X9J"/>
    </source>
</evidence>
<proteinExistence type="evidence at protein level"/>
<gene>
    <name evidence="5" type="primary">prhC</name>
</gene>